<reference key="1">
    <citation type="submission" date="2004-12" db="EMBL/GenBank/DDBJ databases">
        <title>The genome sequence of Borrelia hermsii and Borrelia turicatae: comparative analysis of two agents of endemic N. America relapsing fever.</title>
        <authorList>
            <person name="Porcella S.F."/>
            <person name="Raffel S.J."/>
            <person name="Schrumpf M.E."/>
            <person name="Montgomery B."/>
            <person name="Smith T."/>
            <person name="Schwan T.G."/>
        </authorList>
    </citation>
    <scope>NUCLEOTIDE SEQUENCE [LARGE SCALE GENOMIC DNA]</scope>
    <source>
        <strain>91E135</strain>
    </source>
</reference>
<proteinExistence type="inferred from homology"/>
<keyword id="KW-1185">Reference proteome</keyword>
<keyword id="KW-0687">Ribonucleoprotein</keyword>
<keyword id="KW-0689">Ribosomal protein</keyword>
<feature type="chain" id="PRO_1000196346" description="Small ribosomal subunit protein bS16">
    <location>
        <begin position="1"/>
        <end position="83"/>
    </location>
</feature>
<evidence type="ECO:0000255" key="1">
    <source>
        <dbReference type="HAMAP-Rule" id="MF_00385"/>
    </source>
</evidence>
<evidence type="ECO:0000305" key="2"/>
<protein>
    <recommendedName>
        <fullName evidence="1">Small ribosomal subunit protein bS16</fullName>
    </recommendedName>
    <alternativeName>
        <fullName evidence="2">30S ribosomal protein S16</fullName>
    </alternativeName>
</protein>
<dbReference type="EMBL" id="CP000049">
    <property type="protein sequence ID" value="AAX18011.1"/>
    <property type="molecule type" value="Genomic_DNA"/>
</dbReference>
<dbReference type="RefSeq" id="WP_011772629.1">
    <property type="nucleotide sequence ID" value="NZ_CP073176.1"/>
</dbReference>
<dbReference type="SMR" id="A1R0B9"/>
<dbReference type="KEGG" id="btu:BT0695"/>
<dbReference type="eggNOG" id="COG0228">
    <property type="taxonomic scope" value="Bacteria"/>
</dbReference>
<dbReference type="HOGENOM" id="CLU_100590_5_0_12"/>
<dbReference type="Proteomes" id="UP000001205">
    <property type="component" value="Chromosome"/>
</dbReference>
<dbReference type="GO" id="GO:0005737">
    <property type="term" value="C:cytoplasm"/>
    <property type="evidence" value="ECO:0007669"/>
    <property type="project" value="UniProtKB-ARBA"/>
</dbReference>
<dbReference type="GO" id="GO:0015935">
    <property type="term" value="C:small ribosomal subunit"/>
    <property type="evidence" value="ECO:0007669"/>
    <property type="project" value="TreeGrafter"/>
</dbReference>
<dbReference type="GO" id="GO:0003735">
    <property type="term" value="F:structural constituent of ribosome"/>
    <property type="evidence" value="ECO:0007669"/>
    <property type="project" value="InterPro"/>
</dbReference>
<dbReference type="GO" id="GO:0006412">
    <property type="term" value="P:translation"/>
    <property type="evidence" value="ECO:0007669"/>
    <property type="project" value="UniProtKB-UniRule"/>
</dbReference>
<dbReference type="Gene3D" id="3.30.1320.10">
    <property type="match status" value="1"/>
</dbReference>
<dbReference type="HAMAP" id="MF_00385">
    <property type="entry name" value="Ribosomal_bS16"/>
    <property type="match status" value="1"/>
</dbReference>
<dbReference type="InterPro" id="IPR000307">
    <property type="entry name" value="Ribosomal_bS16"/>
</dbReference>
<dbReference type="InterPro" id="IPR020592">
    <property type="entry name" value="Ribosomal_bS16_CS"/>
</dbReference>
<dbReference type="InterPro" id="IPR023803">
    <property type="entry name" value="Ribosomal_bS16_dom_sf"/>
</dbReference>
<dbReference type="NCBIfam" id="TIGR00002">
    <property type="entry name" value="S16"/>
    <property type="match status" value="1"/>
</dbReference>
<dbReference type="PANTHER" id="PTHR12919">
    <property type="entry name" value="30S RIBOSOMAL PROTEIN S16"/>
    <property type="match status" value="1"/>
</dbReference>
<dbReference type="PANTHER" id="PTHR12919:SF20">
    <property type="entry name" value="SMALL RIBOSOMAL SUBUNIT PROTEIN BS16M"/>
    <property type="match status" value="1"/>
</dbReference>
<dbReference type="Pfam" id="PF00886">
    <property type="entry name" value="Ribosomal_S16"/>
    <property type="match status" value="1"/>
</dbReference>
<dbReference type="SUPFAM" id="SSF54565">
    <property type="entry name" value="Ribosomal protein S16"/>
    <property type="match status" value="1"/>
</dbReference>
<dbReference type="PROSITE" id="PS00732">
    <property type="entry name" value="RIBOSOMAL_S16"/>
    <property type="match status" value="1"/>
</dbReference>
<name>RS16_BORT9</name>
<sequence>MSVRIRLKRMGAKKRPYYRIVVMDSASPRDGRAIEELGYYHPVEKQNQVKINENKFRDWIGKGAIPSDTVKKILNKNNFKVES</sequence>
<gene>
    <name evidence="1" type="primary">rpsP</name>
    <name type="ordered locus">BT0695</name>
</gene>
<organism>
    <name type="scientific">Borrelia turicatae (strain 91E135)</name>
    <dbReference type="NCBI Taxonomy" id="314724"/>
    <lineage>
        <taxon>Bacteria</taxon>
        <taxon>Pseudomonadati</taxon>
        <taxon>Spirochaetota</taxon>
        <taxon>Spirochaetia</taxon>
        <taxon>Spirochaetales</taxon>
        <taxon>Borreliaceae</taxon>
        <taxon>Borrelia</taxon>
    </lineage>
</organism>
<comment type="similarity">
    <text evidence="1">Belongs to the bacterial ribosomal protein bS16 family.</text>
</comment>
<accession>A1R0B9</accession>